<organism>
    <name type="scientific">Burkholderia multivorans (strain ATCC 17616 / 249)</name>
    <dbReference type="NCBI Taxonomy" id="395019"/>
    <lineage>
        <taxon>Bacteria</taxon>
        <taxon>Pseudomonadati</taxon>
        <taxon>Pseudomonadota</taxon>
        <taxon>Betaproteobacteria</taxon>
        <taxon>Burkholderiales</taxon>
        <taxon>Burkholderiaceae</taxon>
        <taxon>Burkholderia</taxon>
        <taxon>Burkholderia cepacia complex</taxon>
    </lineage>
</organism>
<dbReference type="EC" id="4.3.99.3" evidence="1 3"/>
<dbReference type="EMBL" id="CP000868">
    <property type="protein sequence ID" value="ABX16799.1"/>
    <property type="molecule type" value="Genomic_DNA"/>
</dbReference>
<dbReference type="EMBL" id="AP009385">
    <property type="protein sequence ID" value="BAG42094.1"/>
    <property type="molecule type" value="Genomic_DNA"/>
</dbReference>
<dbReference type="RefSeq" id="WP_012214363.1">
    <property type="nucleotide sequence ID" value="NC_010084.1"/>
</dbReference>
<dbReference type="PDB" id="4NJG">
    <property type="method" value="X-ray"/>
    <property type="resolution" value="2.60 A"/>
    <property type="chains" value="A/B=1-210"/>
</dbReference>
<dbReference type="PDB" id="4NJH">
    <property type="method" value="X-ray"/>
    <property type="resolution" value="1.90 A"/>
    <property type="chains" value="A/B=1-210"/>
</dbReference>
<dbReference type="PDB" id="4NJI">
    <property type="method" value="X-ray"/>
    <property type="resolution" value="2.20 A"/>
    <property type="chains" value="A/B=1-210"/>
</dbReference>
<dbReference type="PDB" id="4NJJ">
    <property type="method" value="X-ray"/>
    <property type="resolution" value="2.70 A"/>
    <property type="chains" value="A/B=1-210"/>
</dbReference>
<dbReference type="PDB" id="4NJK">
    <property type="method" value="X-ray"/>
    <property type="resolution" value="1.91 A"/>
    <property type="chains" value="A/B=1-210"/>
</dbReference>
<dbReference type="PDBsum" id="4NJG"/>
<dbReference type="PDBsum" id="4NJH"/>
<dbReference type="PDBsum" id="4NJI"/>
<dbReference type="PDBsum" id="4NJJ"/>
<dbReference type="PDBsum" id="4NJK"/>
<dbReference type="SMR" id="A0A0H3KB22"/>
<dbReference type="STRING" id="395019.BMULJ_00116"/>
<dbReference type="KEGG" id="bmj:BMULJ_00116"/>
<dbReference type="KEGG" id="bmu:Bmul_3115"/>
<dbReference type="eggNOG" id="COG0602">
    <property type="taxonomic scope" value="Bacteria"/>
</dbReference>
<dbReference type="HOGENOM" id="CLU_066739_0_1_4"/>
<dbReference type="BRENDA" id="4.3.99.3">
    <property type="organism ID" value="8177"/>
</dbReference>
<dbReference type="UniPathway" id="UPA00391"/>
<dbReference type="EvolutionaryTrace" id="A0A0H3KB22"/>
<dbReference type="Proteomes" id="UP000008815">
    <property type="component" value="Chromosome 1"/>
</dbReference>
<dbReference type="GO" id="GO:0051539">
    <property type="term" value="F:4 iron, 4 sulfur cluster binding"/>
    <property type="evidence" value="ECO:0000314"/>
    <property type="project" value="UniProtKB"/>
</dbReference>
<dbReference type="GO" id="GO:0016840">
    <property type="term" value="F:carbon-nitrogen lyase activity"/>
    <property type="evidence" value="ECO:0000314"/>
    <property type="project" value="UniProtKB"/>
</dbReference>
<dbReference type="GO" id="GO:0042802">
    <property type="term" value="F:identical protein binding"/>
    <property type="evidence" value="ECO:0000353"/>
    <property type="project" value="IntAct"/>
</dbReference>
<dbReference type="GO" id="GO:0000287">
    <property type="term" value="F:magnesium ion binding"/>
    <property type="evidence" value="ECO:0000314"/>
    <property type="project" value="UniProtKB"/>
</dbReference>
<dbReference type="GO" id="GO:0042803">
    <property type="term" value="F:protein homodimerization activity"/>
    <property type="evidence" value="ECO:0000314"/>
    <property type="project" value="UniProtKB"/>
</dbReference>
<dbReference type="GO" id="GO:1904047">
    <property type="term" value="F:S-adenosyl-L-methionine binding"/>
    <property type="evidence" value="ECO:0000314"/>
    <property type="project" value="UniProtKB"/>
</dbReference>
<dbReference type="GO" id="GO:0008616">
    <property type="term" value="P:queuosine biosynthetic process"/>
    <property type="evidence" value="ECO:0007669"/>
    <property type="project" value="UniProtKB-UniRule"/>
</dbReference>
<dbReference type="FunFam" id="3.20.20.70:FF:000380">
    <property type="entry name" value="7-carboxy-7-deazaguanine synthase"/>
    <property type="match status" value="1"/>
</dbReference>
<dbReference type="Gene3D" id="3.20.20.70">
    <property type="entry name" value="Aldolase class I"/>
    <property type="match status" value="1"/>
</dbReference>
<dbReference type="HAMAP" id="MF_00917">
    <property type="entry name" value="QueE"/>
    <property type="match status" value="1"/>
</dbReference>
<dbReference type="InterPro" id="IPR024924">
    <property type="entry name" value="7-CO-7-deazaguanine_synth-like"/>
</dbReference>
<dbReference type="InterPro" id="IPR013785">
    <property type="entry name" value="Aldolase_TIM"/>
</dbReference>
<dbReference type="InterPro" id="IPR030977">
    <property type="entry name" value="QueE_Cx14CxxC"/>
</dbReference>
<dbReference type="InterPro" id="IPR007197">
    <property type="entry name" value="rSAM"/>
</dbReference>
<dbReference type="NCBIfam" id="TIGR04508">
    <property type="entry name" value="queE_Cx14CxxC"/>
    <property type="match status" value="1"/>
</dbReference>
<dbReference type="PANTHER" id="PTHR42836">
    <property type="entry name" value="7-CARBOXY-7-DEAZAGUANINE SYNTHASE"/>
    <property type="match status" value="1"/>
</dbReference>
<dbReference type="PANTHER" id="PTHR42836:SF1">
    <property type="entry name" value="7-CARBOXY-7-DEAZAGUANINE SYNTHASE"/>
    <property type="match status" value="1"/>
</dbReference>
<dbReference type="PIRSF" id="PIRSF000370">
    <property type="entry name" value="QueE"/>
    <property type="match status" value="1"/>
</dbReference>
<dbReference type="SFLD" id="SFLDF00376">
    <property type="entry name" value="7-carboxy-7-deazaguanine_synth"/>
    <property type="match status" value="1"/>
</dbReference>
<dbReference type="SFLD" id="SFLDS00029">
    <property type="entry name" value="Radical_SAM"/>
    <property type="match status" value="1"/>
</dbReference>
<dbReference type="SUPFAM" id="SSF102114">
    <property type="entry name" value="Radical SAM enzymes"/>
    <property type="match status" value="1"/>
</dbReference>
<dbReference type="PROSITE" id="PS51918">
    <property type="entry name" value="RADICAL_SAM"/>
    <property type="match status" value="1"/>
</dbReference>
<keyword id="KW-0002">3D-structure</keyword>
<keyword id="KW-0004">4Fe-4S</keyword>
<keyword id="KW-0408">Iron</keyword>
<keyword id="KW-0411">Iron-sulfur</keyword>
<keyword id="KW-0456">Lyase</keyword>
<keyword id="KW-0460">Magnesium</keyword>
<keyword id="KW-0479">Metal-binding</keyword>
<keyword id="KW-0671">Queuosine biosynthesis</keyword>
<keyword id="KW-1185">Reference proteome</keyword>
<keyword id="KW-0949">S-adenosyl-L-methionine</keyword>
<feature type="chain" id="PRO_0000435286" description="7-carboxy-7-deazaguanine synthase">
    <location>
        <begin position="1"/>
        <end position="210"/>
    </location>
</feature>
<feature type="domain" description="Radical SAM core" evidence="2">
    <location>
        <begin position="18"/>
        <end position="210"/>
    </location>
</feature>
<feature type="binding site" evidence="3">
    <location>
        <begin position="12"/>
        <end position="14"/>
    </location>
    <ligand>
        <name>substrate</name>
    </ligand>
</feature>
<feature type="binding site" evidence="3">
    <location>
        <position position="27"/>
    </location>
    <ligand>
        <name>substrate</name>
    </ligand>
</feature>
<feature type="binding site" evidence="1 3">
    <location>
        <position position="31"/>
    </location>
    <ligand>
        <name>[4Fe-4S] cluster</name>
        <dbReference type="ChEBI" id="CHEBI:49883"/>
        <note>4Fe-4S-S-AdoMet</note>
    </ligand>
</feature>
<feature type="binding site" evidence="1 3">
    <location>
        <position position="46"/>
    </location>
    <ligand>
        <name>[4Fe-4S] cluster</name>
        <dbReference type="ChEBI" id="CHEBI:49883"/>
        <note>4Fe-4S-S-AdoMet</note>
    </ligand>
</feature>
<feature type="binding site" evidence="3">
    <location>
        <begin position="48"/>
        <end position="50"/>
    </location>
    <ligand>
        <name>S-adenosyl-L-methionine</name>
        <dbReference type="ChEBI" id="CHEBI:59789"/>
    </ligand>
</feature>
<feature type="binding site" evidence="1 3">
    <location>
        <position position="49"/>
    </location>
    <ligand>
        <name>[4Fe-4S] cluster</name>
        <dbReference type="ChEBI" id="CHEBI:49883"/>
        <note>4Fe-4S-S-AdoMet</note>
    </ligand>
</feature>
<feature type="binding site" evidence="3">
    <location>
        <position position="51"/>
    </location>
    <ligand>
        <name>Mg(2+)</name>
        <dbReference type="ChEBI" id="CHEBI:18420"/>
    </ligand>
</feature>
<feature type="binding site" evidence="3">
    <location>
        <position position="90"/>
    </location>
    <ligand>
        <name>substrate</name>
    </ligand>
</feature>
<feature type="binding site" evidence="3">
    <location>
        <position position="92"/>
    </location>
    <ligand>
        <name>S-adenosyl-L-methionine</name>
        <dbReference type="ChEBI" id="CHEBI:59789"/>
    </ligand>
</feature>
<feature type="binding site" evidence="3">
    <location>
        <begin position="133"/>
        <end position="135"/>
    </location>
    <ligand>
        <name>S-adenosyl-L-methionine</name>
        <dbReference type="ChEBI" id="CHEBI:59789"/>
    </ligand>
</feature>
<feature type="binding site" evidence="3">
    <location>
        <begin position="173"/>
        <end position="176"/>
    </location>
    <ligand>
        <name>S-adenosyl-L-methionine</name>
        <dbReference type="ChEBI" id="CHEBI:59789"/>
    </ligand>
</feature>
<feature type="binding site" evidence="3">
    <location>
        <position position="210"/>
    </location>
    <ligand>
        <name>substrate</name>
    </ligand>
</feature>
<feature type="strand" evidence="8">
    <location>
        <begin position="3"/>
        <end position="12"/>
    </location>
</feature>
<feature type="turn" evidence="8">
    <location>
        <begin position="17"/>
        <end position="20"/>
    </location>
</feature>
<feature type="strand" evidence="8">
    <location>
        <begin position="22"/>
        <end position="29"/>
    </location>
</feature>
<feature type="helix" evidence="8">
    <location>
        <begin position="38"/>
        <end position="41"/>
    </location>
</feature>
<feature type="strand" evidence="8">
    <location>
        <begin position="44"/>
        <end position="46"/>
    </location>
</feature>
<feature type="strand" evidence="8">
    <location>
        <begin position="54"/>
        <end position="56"/>
    </location>
</feature>
<feature type="strand" evidence="8">
    <location>
        <begin position="62"/>
        <end position="66"/>
    </location>
</feature>
<feature type="helix" evidence="8">
    <location>
        <begin position="67"/>
        <end position="76"/>
    </location>
</feature>
<feature type="strand" evidence="8">
    <location>
        <begin position="86"/>
        <end position="92"/>
    </location>
</feature>
<feature type="helix" evidence="8">
    <location>
        <begin position="94"/>
        <end position="96"/>
    </location>
</feature>
<feature type="helix" evidence="8">
    <location>
        <begin position="100"/>
        <end position="108"/>
    </location>
</feature>
<feature type="strand" evidence="8">
    <location>
        <begin position="112"/>
        <end position="117"/>
    </location>
</feature>
<feature type="strand" evidence="8">
    <location>
        <begin position="119"/>
        <end position="121"/>
    </location>
</feature>
<feature type="strand" evidence="8">
    <location>
        <begin position="128"/>
        <end position="132"/>
    </location>
</feature>
<feature type="strand" evidence="8">
    <location>
        <begin position="144"/>
        <end position="152"/>
    </location>
</feature>
<feature type="helix" evidence="8">
    <location>
        <begin position="159"/>
        <end position="162"/>
    </location>
</feature>
<feature type="strand" evidence="8">
    <location>
        <begin position="165"/>
        <end position="174"/>
    </location>
</feature>
<feature type="helix" evidence="8">
    <location>
        <begin position="180"/>
        <end position="193"/>
    </location>
</feature>
<feature type="strand" evidence="8">
    <location>
        <begin position="197"/>
        <end position="199"/>
    </location>
</feature>
<feature type="helix" evidence="8">
    <location>
        <begin position="203"/>
        <end position="207"/>
    </location>
</feature>
<comment type="function">
    <text evidence="1 3">Catalyzes the complex heterocyclic radical-mediated conversion of 6-carboxy-5,6,7,8-tetrahydropterin (CPH4) to 7-carboxy-7-deazaguanine (CDG), a step common to the biosynthetic pathways of all 7-deazapurine-containing compounds.</text>
</comment>
<comment type="catalytic activity">
    <reaction evidence="1 3">
        <text>6-carboxy-5,6,7,8-tetrahydropterin + H(+) = 7-carboxy-7-deazaguanine + NH4(+)</text>
        <dbReference type="Rhea" id="RHEA:27974"/>
        <dbReference type="ChEBI" id="CHEBI:15378"/>
        <dbReference type="ChEBI" id="CHEBI:28938"/>
        <dbReference type="ChEBI" id="CHEBI:61032"/>
        <dbReference type="ChEBI" id="CHEBI:61036"/>
        <dbReference type="EC" id="4.3.99.3"/>
    </reaction>
</comment>
<comment type="cofactor">
    <cofactor evidence="1 3">
        <name>[4Fe-4S] cluster</name>
        <dbReference type="ChEBI" id="CHEBI:49883"/>
    </cofactor>
    <text evidence="1 3">Binds 1 [4Fe-4S] cluster. The cluster is coordinated with 3 cysteines and an exchangeable S-adenosyl-L-methionine.</text>
</comment>
<comment type="cofactor">
    <cofactor evidence="1 3">
        <name>S-adenosyl-L-methionine</name>
        <dbReference type="ChEBI" id="CHEBI:59789"/>
    </cofactor>
    <text evidence="1 3">Binds 1 S-adenosyl-L-methionine per subunit.</text>
</comment>
<comment type="cofactor">
    <cofactor evidence="1 3">
        <name>Mg(2+)</name>
        <dbReference type="ChEBI" id="CHEBI:18420"/>
    </cofactor>
</comment>
<comment type="pathway">
    <text evidence="1 5">Purine metabolism; 7-cyano-7-deazaguanine biosynthesis.</text>
</comment>
<comment type="subunit">
    <text evidence="1 3">Homodimer.</text>
</comment>
<comment type="interaction">
    <interactant intactId="EBI-16224608">
        <id>A0A0H3KB22</id>
    </interactant>
    <interactant intactId="EBI-16224608">
        <id>A0A0H3KB22</id>
        <label>queE</label>
    </interactant>
    <organismsDiffer>false</organismsDiffer>
    <experiments>2</experiments>
</comment>
<comment type="similarity">
    <text evidence="1">Belongs to the radical SAM superfamily. 7-carboxy-7-deazaguanine synthase family.</text>
</comment>
<sequence>MTYAVKEIFYTLQGEGANAGRPAVFCRFAGCNLWSGREEDRAQAVCRFCDTDFVGTDGENGGKFKDADALVATIAGLWPAGEAHRFVVCTGGEPMLQLDQPLVDALHAAGFGIAIETNGSLPVLESIDWICVSPKADAPLVVTKGNELKVVIPQDNQRLADYAKLDFEYFLVQPMDGPSRDLNTKLAIDWCKRHPQWRLSMQTHKYLNIP</sequence>
<proteinExistence type="evidence at protein level"/>
<evidence type="ECO:0000255" key="1">
    <source>
        <dbReference type="HAMAP-Rule" id="MF_00917"/>
    </source>
</evidence>
<evidence type="ECO:0000255" key="2">
    <source>
        <dbReference type="PROSITE-ProRule" id="PRU01266"/>
    </source>
</evidence>
<evidence type="ECO:0000269" key="3">
    <source>
    </source>
</evidence>
<evidence type="ECO:0000303" key="4">
    <source>
    </source>
</evidence>
<evidence type="ECO:0000305" key="5">
    <source>
    </source>
</evidence>
<evidence type="ECO:0000312" key="6">
    <source>
        <dbReference type="EMBL" id="ABX16799.1"/>
    </source>
</evidence>
<evidence type="ECO:0000312" key="7">
    <source>
        <dbReference type="EMBL" id="BAG42094.1"/>
    </source>
</evidence>
<evidence type="ECO:0007829" key="8">
    <source>
        <dbReference type="PDB" id="4NJH"/>
    </source>
</evidence>
<reference key="1">
    <citation type="submission" date="2007-10" db="EMBL/GenBank/DDBJ databases">
        <title>Complete sequence of chromosome 1 of Burkholderia multivorans ATCC 17616.</title>
        <authorList>
            <person name="Copeland A."/>
            <person name="Lucas S."/>
            <person name="Lapidus A."/>
            <person name="Barry K."/>
            <person name="Glavina del Rio T."/>
            <person name="Dalin E."/>
            <person name="Tice H."/>
            <person name="Pitluck S."/>
            <person name="Chain P."/>
            <person name="Malfatti S."/>
            <person name="Shin M."/>
            <person name="Vergez L."/>
            <person name="Schmutz J."/>
            <person name="Larimer F."/>
            <person name="Land M."/>
            <person name="Hauser L."/>
            <person name="Kyrpides N."/>
            <person name="Kim E."/>
            <person name="Tiedje J."/>
            <person name="Richardson P."/>
        </authorList>
    </citation>
    <scope>NUCLEOTIDE SEQUENCE [LARGE SCALE GENOMIC DNA]</scope>
    <source>
        <strain>ATCC 17616 / 249</strain>
    </source>
</reference>
<reference key="2">
    <citation type="submission" date="2007-04" db="EMBL/GenBank/DDBJ databases">
        <title>Complete genome sequence of Burkholderia multivorans ATCC 17616.</title>
        <authorList>
            <person name="Ohtsubo Y."/>
            <person name="Yamashita A."/>
            <person name="Kurokawa K."/>
            <person name="Takami H."/>
            <person name="Yuhara S."/>
            <person name="Nishiyama E."/>
            <person name="Endo R."/>
            <person name="Miyazaki R."/>
            <person name="Ono A."/>
            <person name="Yano K."/>
            <person name="Ito M."/>
            <person name="Sota M."/>
            <person name="Yuji N."/>
            <person name="Hattori M."/>
            <person name="Tsuda M."/>
        </authorList>
    </citation>
    <scope>NUCLEOTIDE SEQUENCE [LARGE SCALE GENOMIC DNA]</scope>
    <source>
        <strain>ATCC 17616 / 249</strain>
    </source>
</reference>
<reference key="3">
    <citation type="journal article" date="2014" name="Nat. Chem. Biol.">
        <title>Radical SAM enzyme QueE defines a new minimal core fold and metal-dependent mechanism.</title>
        <authorList>
            <person name="Dowling D.P."/>
            <person name="Bruender N.A."/>
            <person name="Young A.P."/>
            <person name="McCarty R.M."/>
            <person name="Bandarian V."/>
            <person name="Drennan C.L."/>
        </authorList>
    </citation>
    <scope>X-RAY CRYSTALLOGRAPHY (1.90 ANGSTROMS) IN COMPLEXES WITH IRON-SULFUR (4FE-4S); SAM; 6-CARBOXYPTERIN; 6-CARBOXY-5,6,7,8-TETRAHYDROPTERIN; 7-CARBOXY-7-DEAZAGUANINE AND MAGNESIUM</scope>
    <scope>FUNCTION</scope>
    <scope>CATALYTIC ACTIVITY</scope>
    <scope>COFACTOR</scope>
    <scope>PATHWAY</scope>
    <scope>SUBUNIT</scope>
    <scope>REACTION MECHANISM</scope>
</reference>
<accession>A0A0H3KB22</accession>
<name>QUEE_BURM1</name>
<protein>
    <recommendedName>
        <fullName evidence="1 4">7-carboxy-7-deazaguanine synthase</fullName>
        <shortName evidence="1 4">CDG synthase</shortName>
        <ecNumber evidence="1 3">4.3.99.3</ecNumber>
    </recommendedName>
    <alternativeName>
        <fullName evidence="1">Queuosine biosynthesis protein QueE</fullName>
    </alternativeName>
</protein>
<gene>
    <name evidence="1 4" type="primary">queE</name>
    <name evidence="6" type="ordered locus">Bmul_3115</name>
    <name evidence="7" type="ordered locus">BMULJ_00116</name>
</gene>